<organism>
    <name type="scientific">Clostridium perfringens (strain SM101 / Type A)</name>
    <dbReference type="NCBI Taxonomy" id="289380"/>
    <lineage>
        <taxon>Bacteria</taxon>
        <taxon>Bacillati</taxon>
        <taxon>Bacillota</taxon>
        <taxon>Clostridia</taxon>
        <taxon>Eubacteriales</taxon>
        <taxon>Clostridiaceae</taxon>
        <taxon>Clostridium</taxon>
    </lineage>
</organism>
<gene>
    <name evidence="1" type="primary">rpsO</name>
    <name type="ordered locus">CPR_1653</name>
</gene>
<proteinExistence type="inferred from homology"/>
<feature type="chain" id="PRO_0000354193" description="Small ribosomal subunit protein uS15">
    <location>
        <begin position="1"/>
        <end position="87"/>
    </location>
</feature>
<comment type="function">
    <text evidence="1">One of the primary rRNA binding proteins, it binds directly to 16S rRNA where it helps nucleate assembly of the platform of the 30S subunit by binding and bridging several RNA helices of the 16S rRNA.</text>
</comment>
<comment type="function">
    <text evidence="1">Forms an intersubunit bridge (bridge B4) with the 23S rRNA of the 50S subunit in the ribosome.</text>
</comment>
<comment type="subunit">
    <text evidence="1">Part of the 30S ribosomal subunit. Forms a bridge to the 50S subunit in the 70S ribosome, contacting the 23S rRNA.</text>
</comment>
<comment type="similarity">
    <text evidence="1">Belongs to the universal ribosomal protein uS15 family.</text>
</comment>
<accession>Q0SSD9</accession>
<keyword id="KW-0687">Ribonucleoprotein</keyword>
<keyword id="KW-0689">Ribosomal protein</keyword>
<keyword id="KW-0694">RNA-binding</keyword>
<keyword id="KW-0699">rRNA-binding</keyword>
<reference key="1">
    <citation type="journal article" date="2006" name="Genome Res.">
        <title>Skewed genomic variability in strains of the toxigenic bacterial pathogen, Clostridium perfringens.</title>
        <authorList>
            <person name="Myers G.S.A."/>
            <person name="Rasko D.A."/>
            <person name="Cheung J.K."/>
            <person name="Ravel J."/>
            <person name="Seshadri R."/>
            <person name="DeBoy R.T."/>
            <person name="Ren Q."/>
            <person name="Varga J."/>
            <person name="Awad M.M."/>
            <person name="Brinkac L.M."/>
            <person name="Daugherty S.C."/>
            <person name="Haft D.H."/>
            <person name="Dodson R.J."/>
            <person name="Madupu R."/>
            <person name="Nelson W.C."/>
            <person name="Rosovitz M.J."/>
            <person name="Sullivan S.A."/>
            <person name="Khouri H."/>
            <person name="Dimitrov G.I."/>
            <person name="Watkins K.L."/>
            <person name="Mulligan S."/>
            <person name="Benton J."/>
            <person name="Radune D."/>
            <person name="Fisher D.J."/>
            <person name="Atkins H.S."/>
            <person name="Hiscox T."/>
            <person name="Jost B.H."/>
            <person name="Billington S.J."/>
            <person name="Songer J.G."/>
            <person name="McClane B.A."/>
            <person name="Titball R.W."/>
            <person name="Rood J.I."/>
            <person name="Melville S.B."/>
            <person name="Paulsen I.T."/>
        </authorList>
    </citation>
    <scope>NUCLEOTIDE SEQUENCE [LARGE SCALE GENOMIC DNA]</scope>
    <source>
        <strain>SM101 / Type A</strain>
    </source>
</reference>
<name>RS15_CLOPS</name>
<dbReference type="EMBL" id="CP000312">
    <property type="protein sequence ID" value="ABG86327.1"/>
    <property type="molecule type" value="Genomic_DNA"/>
</dbReference>
<dbReference type="RefSeq" id="WP_003449423.1">
    <property type="nucleotide sequence ID" value="NZ_CAXVKH010000001.1"/>
</dbReference>
<dbReference type="SMR" id="Q0SSD9"/>
<dbReference type="GeneID" id="93001781"/>
<dbReference type="KEGG" id="cpr:CPR_1653"/>
<dbReference type="Proteomes" id="UP000001824">
    <property type="component" value="Chromosome"/>
</dbReference>
<dbReference type="GO" id="GO:0022627">
    <property type="term" value="C:cytosolic small ribosomal subunit"/>
    <property type="evidence" value="ECO:0007669"/>
    <property type="project" value="TreeGrafter"/>
</dbReference>
<dbReference type="GO" id="GO:0019843">
    <property type="term" value="F:rRNA binding"/>
    <property type="evidence" value="ECO:0007669"/>
    <property type="project" value="UniProtKB-UniRule"/>
</dbReference>
<dbReference type="GO" id="GO:0003735">
    <property type="term" value="F:structural constituent of ribosome"/>
    <property type="evidence" value="ECO:0007669"/>
    <property type="project" value="InterPro"/>
</dbReference>
<dbReference type="GO" id="GO:0006412">
    <property type="term" value="P:translation"/>
    <property type="evidence" value="ECO:0007669"/>
    <property type="project" value="UniProtKB-UniRule"/>
</dbReference>
<dbReference type="CDD" id="cd00353">
    <property type="entry name" value="Ribosomal_S15p_S13e"/>
    <property type="match status" value="1"/>
</dbReference>
<dbReference type="FunFam" id="1.10.287.10:FF:000002">
    <property type="entry name" value="30S ribosomal protein S15"/>
    <property type="match status" value="1"/>
</dbReference>
<dbReference type="Gene3D" id="6.10.250.3130">
    <property type="match status" value="1"/>
</dbReference>
<dbReference type="Gene3D" id="1.10.287.10">
    <property type="entry name" value="S15/NS1, RNA-binding"/>
    <property type="match status" value="1"/>
</dbReference>
<dbReference type="HAMAP" id="MF_01343_B">
    <property type="entry name" value="Ribosomal_uS15_B"/>
    <property type="match status" value="1"/>
</dbReference>
<dbReference type="InterPro" id="IPR000589">
    <property type="entry name" value="Ribosomal_uS15"/>
</dbReference>
<dbReference type="InterPro" id="IPR005290">
    <property type="entry name" value="Ribosomal_uS15_bac-type"/>
</dbReference>
<dbReference type="InterPro" id="IPR009068">
    <property type="entry name" value="uS15_NS1_RNA-bd_sf"/>
</dbReference>
<dbReference type="NCBIfam" id="TIGR00952">
    <property type="entry name" value="S15_bact"/>
    <property type="match status" value="1"/>
</dbReference>
<dbReference type="PANTHER" id="PTHR23321">
    <property type="entry name" value="RIBOSOMAL PROTEIN S15, BACTERIAL AND ORGANELLAR"/>
    <property type="match status" value="1"/>
</dbReference>
<dbReference type="PANTHER" id="PTHR23321:SF26">
    <property type="entry name" value="SMALL RIBOSOMAL SUBUNIT PROTEIN US15M"/>
    <property type="match status" value="1"/>
</dbReference>
<dbReference type="Pfam" id="PF00312">
    <property type="entry name" value="Ribosomal_S15"/>
    <property type="match status" value="1"/>
</dbReference>
<dbReference type="SMART" id="SM01387">
    <property type="entry name" value="Ribosomal_S15"/>
    <property type="match status" value="1"/>
</dbReference>
<dbReference type="SUPFAM" id="SSF47060">
    <property type="entry name" value="S15/NS1 RNA-binding domain"/>
    <property type="match status" value="1"/>
</dbReference>
<dbReference type="PROSITE" id="PS00362">
    <property type="entry name" value="RIBOSOMAL_S15"/>
    <property type="match status" value="1"/>
</dbReference>
<evidence type="ECO:0000255" key="1">
    <source>
        <dbReference type="HAMAP-Rule" id="MF_01343"/>
    </source>
</evidence>
<evidence type="ECO:0000305" key="2"/>
<protein>
    <recommendedName>
        <fullName evidence="1">Small ribosomal subunit protein uS15</fullName>
    </recommendedName>
    <alternativeName>
        <fullName evidence="2">30S ribosomal protein S15</fullName>
    </alternativeName>
</protein>
<sequence>MDKIRKQEIIAKHARHEGDTGSPEVQIALLTERINSLTDHLRTHKKDHHSRRGLLMMVGQRRGLLNYLYEQDIERYRAIIKELGLRR</sequence>